<reference key="1">
    <citation type="submission" date="2003-06" db="EMBL/GenBank/DDBJ databases">
        <title>The complete genome sequence of Haemophilus ducreyi.</title>
        <authorList>
            <person name="Munson R.S. Jr."/>
            <person name="Ray W.C."/>
            <person name="Mahairas G."/>
            <person name="Sabo P."/>
            <person name="Mungur R."/>
            <person name="Johnson L."/>
            <person name="Nguyen D."/>
            <person name="Wang J."/>
            <person name="Forst C."/>
            <person name="Hood L."/>
        </authorList>
    </citation>
    <scope>NUCLEOTIDE SEQUENCE [LARGE SCALE GENOMIC DNA]</scope>
    <source>
        <strain>35000HP / ATCC 700724</strain>
    </source>
</reference>
<organism>
    <name type="scientific">Haemophilus ducreyi (strain 35000HP / ATCC 700724)</name>
    <dbReference type="NCBI Taxonomy" id="233412"/>
    <lineage>
        <taxon>Bacteria</taxon>
        <taxon>Pseudomonadati</taxon>
        <taxon>Pseudomonadota</taxon>
        <taxon>Gammaproteobacteria</taxon>
        <taxon>Pasteurellales</taxon>
        <taxon>Pasteurellaceae</taxon>
        <taxon>Haemophilus</taxon>
    </lineage>
</organism>
<sequence length="82" mass="9862">MAELNRFKIEWQCRRGMRELDKMIMPFYQQYFEQLSEAEQRTFVTMLSYTDPELFRWVMHQSPAPTVAISALIERIRASIEA</sequence>
<name>SDHE_HAEDU</name>
<protein>
    <recommendedName>
        <fullName>FAD assembly factor SdhE</fullName>
    </recommendedName>
</protein>
<gene>
    <name type="primary">sdhE</name>
    <name type="ordered locus">HD_0065</name>
</gene>
<comment type="function">
    <text evidence="1">An FAD assembly protein, which accelerates covalent attachment of the cofactor into other proteins. Plays an essential role in the assembly of succinate dehydrogenase (SDH, respiratory complex II), an enzyme complex that is a component of both the tricarboxylic acid cycle and the electron transport chain, and which couples the oxidation of succinate to fumarate with the reduction of ubiquinone (coenzyme Q) to ubiquinol. Required for flavinylation (covalent attachment of FAD) of the flavoprotein subunit SdhA of SDH and other flavinylated proteins as well.</text>
</comment>
<comment type="subcellular location">
    <subcellularLocation>
        <location evidence="1">Cytoplasm</location>
    </subcellularLocation>
</comment>
<comment type="similarity">
    <text evidence="2">Belongs to the SdhE FAD assembly factor family.</text>
</comment>
<accession>Q7VPK3</accession>
<feature type="chain" id="PRO_0000214399" description="FAD assembly factor SdhE">
    <location>
        <begin position="1"/>
        <end position="82"/>
    </location>
</feature>
<dbReference type="EMBL" id="AE017143">
    <property type="protein sequence ID" value="AAP95077.1"/>
    <property type="molecule type" value="Genomic_DNA"/>
</dbReference>
<dbReference type="RefSeq" id="WP_010944131.1">
    <property type="nucleotide sequence ID" value="NC_002940.2"/>
</dbReference>
<dbReference type="SMR" id="Q7VPK3"/>
<dbReference type="STRING" id="233412.HD_0065"/>
<dbReference type="KEGG" id="hdu:HD_0065"/>
<dbReference type="eggNOG" id="COG2938">
    <property type="taxonomic scope" value="Bacteria"/>
</dbReference>
<dbReference type="HOGENOM" id="CLU_103054_2_2_6"/>
<dbReference type="OrthoDB" id="9180899at2"/>
<dbReference type="Proteomes" id="UP000001022">
    <property type="component" value="Chromosome"/>
</dbReference>
<dbReference type="GO" id="GO:0005737">
    <property type="term" value="C:cytoplasm"/>
    <property type="evidence" value="ECO:0007669"/>
    <property type="project" value="UniProtKB-SubCell"/>
</dbReference>
<dbReference type="GO" id="GO:0006105">
    <property type="term" value="P:succinate metabolic process"/>
    <property type="evidence" value="ECO:0007669"/>
    <property type="project" value="TreeGrafter"/>
</dbReference>
<dbReference type="Gene3D" id="1.10.150.250">
    <property type="entry name" value="Flavinator of succinate dehydrogenase"/>
    <property type="match status" value="1"/>
</dbReference>
<dbReference type="InterPro" id="IPR005631">
    <property type="entry name" value="SDH"/>
</dbReference>
<dbReference type="InterPro" id="IPR036714">
    <property type="entry name" value="SDH_sf"/>
</dbReference>
<dbReference type="InterPro" id="IPR050531">
    <property type="entry name" value="SdhE_FAD_assembly_factor"/>
</dbReference>
<dbReference type="PANTHER" id="PTHR39585">
    <property type="entry name" value="FAD ASSEMBLY FACTOR SDHE"/>
    <property type="match status" value="1"/>
</dbReference>
<dbReference type="PANTHER" id="PTHR39585:SF1">
    <property type="entry name" value="FAD ASSEMBLY FACTOR SDHE"/>
    <property type="match status" value="1"/>
</dbReference>
<dbReference type="Pfam" id="PF03937">
    <property type="entry name" value="Sdh5"/>
    <property type="match status" value="1"/>
</dbReference>
<dbReference type="SUPFAM" id="SSF109910">
    <property type="entry name" value="YgfY-like"/>
    <property type="match status" value="1"/>
</dbReference>
<evidence type="ECO:0000250" key="1">
    <source>
        <dbReference type="UniProtKB" id="G4V4G2"/>
    </source>
</evidence>
<evidence type="ECO:0000305" key="2"/>
<keyword id="KW-0143">Chaperone</keyword>
<keyword id="KW-0963">Cytoplasm</keyword>
<keyword id="KW-1185">Reference proteome</keyword>
<proteinExistence type="inferred from homology"/>